<evidence type="ECO:0000255" key="1">
    <source>
        <dbReference type="HAMAP-Rule" id="MF_00361"/>
    </source>
</evidence>
<feature type="chain" id="PRO_0000229702" description="NAD kinase 1">
    <location>
        <begin position="1"/>
        <end position="306"/>
    </location>
</feature>
<feature type="active site" description="Proton acceptor" evidence="1">
    <location>
        <position position="67"/>
    </location>
</feature>
<feature type="binding site" evidence="1">
    <location>
        <begin position="67"/>
        <end position="68"/>
    </location>
    <ligand>
        <name>NAD(+)</name>
        <dbReference type="ChEBI" id="CHEBI:57540"/>
    </ligand>
</feature>
<feature type="binding site" evidence="1">
    <location>
        <begin position="149"/>
        <end position="150"/>
    </location>
    <ligand>
        <name>NAD(+)</name>
        <dbReference type="ChEBI" id="CHEBI:57540"/>
    </ligand>
</feature>
<feature type="binding site" evidence="1">
    <location>
        <position position="181"/>
    </location>
    <ligand>
        <name>NAD(+)</name>
        <dbReference type="ChEBI" id="CHEBI:57540"/>
    </ligand>
</feature>
<protein>
    <recommendedName>
        <fullName evidence="1">NAD kinase 1</fullName>
        <ecNumber evidence="1">2.7.1.23</ecNumber>
    </recommendedName>
    <alternativeName>
        <fullName evidence="1">ATP-dependent NAD kinase 1</fullName>
    </alternativeName>
</protein>
<reference key="1">
    <citation type="journal article" date="2007" name="Photosyn. Res.">
        <title>Complete nucleotide sequence of the freshwater unicellular cyanobacterium Synechococcus elongatus PCC 6301 chromosome: gene content and organization.</title>
        <authorList>
            <person name="Sugita C."/>
            <person name="Ogata K."/>
            <person name="Shikata M."/>
            <person name="Jikuya H."/>
            <person name="Takano J."/>
            <person name="Furumichi M."/>
            <person name="Kanehisa M."/>
            <person name="Omata T."/>
            <person name="Sugiura M."/>
            <person name="Sugita M."/>
        </authorList>
    </citation>
    <scope>NUCLEOTIDE SEQUENCE [LARGE SCALE GENOMIC DNA]</scope>
    <source>
        <strain>ATCC 27144 / PCC 6301 / SAUG 1402/1</strain>
    </source>
</reference>
<organism>
    <name type="scientific">Synechococcus sp. (strain ATCC 27144 / PCC 6301 / SAUG 1402/1)</name>
    <name type="common">Anacystis nidulans</name>
    <dbReference type="NCBI Taxonomy" id="269084"/>
    <lineage>
        <taxon>Bacteria</taxon>
        <taxon>Bacillati</taxon>
        <taxon>Cyanobacteriota</taxon>
        <taxon>Cyanophyceae</taxon>
        <taxon>Synechococcales</taxon>
        <taxon>Synechococcaceae</taxon>
        <taxon>Synechococcus</taxon>
    </lineage>
</organism>
<comment type="function">
    <text evidence="1">Involved in the regulation of the intracellular balance of NAD and NADP, and is a key enzyme in the biosynthesis of NADP. Catalyzes specifically the phosphorylation on 2'-hydroxyl of the adenosine moiety of NAD to yield NADP.</text>
</comment>
<comment type="catalytic activity">
    <reaction evidence="1">
        <text>NAD(+) + ATP = ADP + NADP(+) + H(+)</text>
        <dbReference type="Rhea" id="RHEA:18629"/>
        <dbReference type="ChEBI" id="CHEBI:15378"/>
        <dbReference type="ChEBI" id="CHEBI:30616"/>
        <dbReference type="ChEBI" id="CHEBI:57540"/>
        <dbReference type="ChEBI" id="CHEBI:58349"/>
        <dbReference type="ChEBI" id="CHEBI:456216"/>
        <dbReference type="EC" id="2.7.1.23"/>
    </reaction>
</comment>
<comment type="cofactor">
    <cofactor evidence="1">
        <name>a divalent metal cation</name>
        <dbReference type="ChEBI" id="CHEBI:60240"/>
    </cofactor>
</comment>
<comment type="subcellular location">
    <subcellularLocation>
        <location evidence="1">Cytoplasm</location>
    </subcellularLocation>
</comment>
<comment type="similarity">
    <text evidence="1">Belongs to the NAD kinase family.</text>
</comment>
<accession>Q5MZV1</accession>
<name>NADK1_SYNP6</name>
<gene>
    <name evidence="1" type="primary">nadK1</name>
    <name type="ordered locus">syc2229_c</name>
</gene>
<dbReference type="EC" id="2.7.1.23" evidence="1"/>
<dbReference type="EMBL" id="AP008231">
    <property type="protein sequence ID" value="BAD80419.1"/>
    <property type="molecule type" value="Genomic_DNA"/>
</dbReference>
<dbReference type="RefSeq" id="WP_011244539.1">
    <property type="nucleotide sequence ID" value="NZ_CP085785.1"/>
</dbReference>
<dbReference type="SMR" id="Q5MZV1"/>
<dbReference type="KEGG" id="syc:syc2229_c"/>
<dbReference type="eggNOG" id="COG0061">
    <property type="taxonomic scope" value="Bacteria"/>
</dbReference>
<dbReference type="Proteomes" id="UP000001175">
    <property type="component" value="Chromosome"/>
</dbReference>
<dbReference type="GO" id="GO:0005737">
    <property type="term" value="C:cytoplasm"/>
    <property type="evidence" value="ECO:0007669"/>
    <property type="project" value="UniProtKB-SubCell"/>
</dbReference>
<dbReference type="GO" id="GO:0005524">
    <property type="term" value="F:ATP binding"/>
    <property type="evidence" value="ECO:0007669"/>
    <property type="project" value="UniProtKB-KW"/>
</dbReference>
<dbReference type="GO" id="GO:0046872">
    <property type="term" value="F:metal ion binding"/>
    <property type="evidence" value="ECO:0007669"/>
    <property type="project" value="UniProtKB-UniRule"/>
</dbReference>
<dbReference type="GO" id="GO:0051287">
    <property type="term" value="F:NAD binding"/>
    <property type="evidence" value="ECO:0007669"/>
    <property type="project" value="UniProtKB-ARBA"/>
</dbReference>
<dbReference type="GO" id="GO:0003951">
    <property type="term" value="F:NAD+ kinase activity"/>
    <property type="evidence" value="ECO:0007669"/>
    <property type="project" value="UniProtKB-UniRule"/>
</dbReference>
<dbReference type="GO" id="GO:0019674">
    <property type="term" value="P:NAD metabolic process"/>
    <property type="evidence" value="ECO:0007669"/>
    <property type="project" value="InterPro"/>
</dbReference>
<dbReference type="GO" id="GO:0006741">
    <property type="term" value="P:NADP biosynthetic process"/>
    <property type="evidence" value="ECO:0007669"/>
    <property type="project" value="UniProtKB-UniRule"/>
</dbReference>
<dbReference type="Gene3D" id="3.40.50.10330">
    <property type="entry name" value="Probable inorganic polyphosphate/atp-NAD kinase, domain 1"/>
    <property type="match status" value="1"/>
</dbReference>
<dbReference type="Gene3D" id="2.60.200.30">
    <property type="entry name" value="Probable inorganic polyphosphate/atp-NAD kinase, domain 2"/>
    <property type="match status" value="1"/>
</dbReference>
<dbReference type="HAMAP" id="MF_00361">
    <property type="entry name" value="NAD_kinase"/>
    <property type="match status" value="1"/>
</dbReference>
<dbReference type="InterPro" id="IPR017438">
    <property type="entry name" value="ATP-NAD_kinase_N"/>
</dbReference>
<dbReference type="InterPro" id="IPR017437">
    <property type="entry name" value="ATP-NAD_kinase_PpnK-typ_C"/>
</dbReference>
<dbReference type="InterPro" id="IPR016064">
    <property type="entry name" value="NAD/diacylglycerol_kinase_sf"/>
</dbReference>
<dbReference type="InterPro" id="IPR002504">
    <property type="entry name" value="NADK"/>
</dbReference>
<dbReference type="NCBIfam" id="NF002731">
    <property type="entry name" value="PRK02645.1"/>
    <property type="match status" value="1"/>
</dbReference>
<dbReference type="PANTHER" id="PTHR20275">
    <property type="entry name" value="NAD KINASE"/>
    <property type="match status" value="1"/>
</dbReference>
<dbReference type="PANTHER" id="PTHR20275:SF0">
    <property type="entry name" value="NAD KINASE"/>
    <property type="match status" value="1"/>
</dbReference>
<dbReference type="Pfam" id="PF01513">
    <property type="entry name" value="NAD_kinase"/>
    <property type="match status" value="1"/>
</dbReference>
<dbReference type="Pfam" id="PF20143">
    <property type="entry name" value="NAD_kinase_C"/>
    <property type="match status" value="1"/>
</dbReference>
<dbReference type="SUPFAM" id="SSF111331">
    <property type="entry name" value="NAD kinase/diacylglycerol kinase-like"/>
    <property type="match status" value="1"/>
</dbReference>
<keyword id="KW-0067">ATP-binding</keyword>
<keyword id="KW-0963">Cytoplasm</keyword>
<keyword id="KW-0418">Kinase</keyword>
<keyword id="KW-0520">NAD</keyword>
<keyword id="KW-0521">NADP</keyword>
<keyword id="KW-0547">Nucleotide-binding</keyword>
<keyword id="KW-0808">Transferase</keyword>
<sequence length="306" mass="33423">MQLRQVIIAYKAGDPTSKAAADDCAHCLESQGIHVMLGPSGARDNPFPVFLASATEPIDLAIVLGGDGTVLAAARHLSDAGIPLLTFNVGGHLGFLTQPRDFFQPEAELWDRLRNDQYAVEQRMMLAASLHEGGRENREPISETYYALNDMCVKPAAPDRMSVCILEMEVDGEIIDQYQGDGLIVSTPTGSTCYTAAAHGPIVHPGVDALAVTPICAMSLSSRPIVIPPRSVVSVWPLGTQDPTIKLWMDGVLATSIWPGQRVDIRMAEKPAQFLVLDSDRSFYRILREKLQWAGAVIHYNNNFRN</sequence>
<proteinExistence type="inferred from homology"/>